<accession>Q252M0</accession>
<comment type="function">
    <text evidence="1">Catalyzes oxygen-dependent 5-hydroxyuridine (ho5U) modification at position 34 in tRNAs.</text>
</comment>
<comment type="catalytic activity">
    <reaction evidence="1">
        <text>uridine(34) in tRNA + AH2 + O2 = 5-hydroxyuridine(34) in tRNA + A + H2O</text>
        <dbReference type="Rhea" id="RHEA:64224"/>
        <dbReference type="Rhea" id="RHEA-COMP:11727"/>
        <dbReference type="Rhea" id="RHEA-COMP:13381"/>
        <dbReference type="ChEBI" id="CHEBI:13193"/>
        <dbReference type="ChEBI" id="CHEBI:15377"/>
        <dbReference type="ChEBI" id="CHEBI:15379"/>
        <dbReference type="ChEBI" id="CHEBI:17499"/>
        <dbReference type="ChEBI" id="CHEBI:65315"/>
        <dbReference type="ChEBI" id="CHEBI:136877"/>
    </reaction>
</comment>
<comment type="similarity">
    <text evidence="1">Belongs to the TrhO family.</text>
</comment>
<evidence type="ECO:0000255" key="1">
    <source>
        <dbReference type="HAMAP-Rule" id="MF_00469"/>
    </source>
</evidence>
<keyword id="KW-0560">Oxidoreductase</keyword>
<keyword id="KW-0819">tRNA processing</keyword>
<sequence>MKKNYYALAYYHFTRVDNPQEEIALHKELFKKLDVSCRIYISEQGINGQFSGYQPDAEYYMNWLKQRPGFSNVKFKIHHIEENIFPRATVKYRKELVALGCDVDLSNQGKHISPKEWHEKLEENRCLVLDVRNNYEWKIGHFENAVLPDIQTFREFPEYAEQLSKEHDPETTPVMMYCTGGIRCELYSSLLLEKGFKEVYQLDGGVIAYGQAMGTGKWRGKLFVFDDRLAVPIDEADTDVSPIAQCSHCEASCDTYYNCANTDCNNLFICCEECIHSTKGCCSQECSQAPRIRSFSTSRGNKPFRRMHLCEISEEQEKPLSCCLR</sequence>
<name>TRHO_CHLFF</name>
<reference key="1">
    <citation type="journal article" date="2006" name="DNA Res.">
        <title>Genome sequence of the cat pathogen, Chlamydophila felis.</title>
        <authorList>
            <person name="Azuma Y."/>
            <person name="Hirakawa H."/>
            <person name="Yamashita A."/>
            <person name="Cai Y."/>
            <person name="Rahman M.A."/>
            <person name="Suzuki H."/>
            <person name="Mitaku S."/>
            <person name="Toh H."/>
            <person name="Goto S."/>
            <person name="Murakami T."/>
            <person name="Sugi K."/>
            <person name="Hayashi H."/>
            <person name="Fukushi H."/>
            <person name="Hattori M."/>
            <person name="Kuhara S."/>
            <person name="Shirai M."/>
        </authorList>
    </citation>
    <scope>NUCLEOTIDE SEQUENCE [LARGE SCALE GENOMIC DNA]</scope>
    <source>
        <strain>Fe/C-56</strain>
    </source>
</reference>
<proteinExistence type="inferred from homology"/>
<organism>
    <name type="scientific">Chlamydia felis (strain Fe/C-56)</name>
    <name type="common">Chlamydophila felis</name>
    <dbReference type="NCBI Taxonomy" id="264202"/>
    <lineage>
        <taxon>Bacteria</taxon>
        <taxon>Pseudomonadati</taxon>
        <taxon>Chlamydiota</taxon>
        <taxon>Chlamydiia</taxon>
        <taxon>Chlamydiales</taxon>
        <taxon>Chlamydiaceae</taxon>
        <taxon>Chlamydia/Chlamydophila group</taxon>
        <taxon>Chlamydia</taxon>
    </lineage>
</organism>
<dbReference type="EC" id="1.14.-.-" evidence="1"/>
<dbReference type="EMBL" id="AP006861">
    <property type="protein sequence ID" value="BAE81768.1"/>
    <property type="molecule type" value="Genomic_DNA"/>
</dbReference>
<dbReference type="RefSeq" id="WP_011458541.1">
    <property type="nucleotide sequence ID" value="NC_007899.1"/>
</dbReference>
<dbReference type="SMR" id="Q252M0"/>
<dbReference type="STRING" id="264202.gene:10544837"/>
<dbReference type="KEGG" id="cfe:BAE81768.1"/>
<dbReference type="eggNOG" id="COG1054">
    <property type="taxonomic scope" value="Bacteria"/>
</dbReference>
<dbReference type="HOGENOM" id="CLU_038878_1_0_0"/>
<dbReference type="OrthoDB" id="9778326at2"/>
<dbReference type="Proteomes" id="UP000001260">
    <property type="component" value="Chromosome"/>
</dbReference>
<dbReference type="GO" id="GO:0016705">
    <property type="term" value="F:oxidoreductase activity, acting on paired donors, with incorporation or reduction of molecular oxygen"/>
    <property type="evidence" value="ECO:0007669"/>
    <property type="project" value="UniProtKB-UniRule"/>
</dbReference>
<dbReference type="GO" id="GO:0006400">
    <property type="term" value="P:tRNA modification"/>
    <property type="evidence" value="ECO:0007669"/>
    <property type="project" value="UniProtKB-UniRule"/>
</dbReference>
<dbReference type="CDD" id="cd01518">
    <property type="entry name" value="RHOD_YceA"/>
    <property type="match status" value="1"/>
</dbReference>
<dbReference type="Gene3D" id="3.30.70.100">
    <property type="match status" value="1"/>
</dbReference>
<dbReference type="Gene3D" id="3.40.250.10">
    <property type="entry name" value="Rhodanese-like domain"/>
    <property type="match status" value="1"/>
</dbReference>
<dbReference type="HAMAP" id="MF_00469">
    <property type="entry name" value="TrhO"/>
    <property type="match status" value="1"/>
</dbReference>
<dbReference type="InterPro" id="IPR001763">
    <property type="entry name" value="Rhodanese-like_dom"/>
</dbReference>
<dbReference type="InterPro" id="IPR036873">
    <property type="entry name" value="Rhodanese-like_dom_sf"/>
</dbReference>
<dbReference type="InterPro" id="IPR022111">
    <property type="entry name" value="Rhodanese_C"/>
</dbReference>
<dbReference type="InterPro" id="IPR020936">
    <property type="entry name" value="TrhO"/>
</dbReference>
<dbReference type="InterPro" id="IPR040503">
    <property type="entry name" value="TRHO_N"/>
</dbReference>
<dbReference type="NCBIfam" id="NF001134">
    <property type="entry name" value="PRK00142.1-2"/>
    <property type="match status" value="1"/>
</dbReference>
<dbReference type="NCBIfam" id="NF001135">
    <property type="entry name" value="PRK00142.1-3"/>
    <property type="match status" value="1"/>
</dbReference>
<dbReference type="PANTHER" id="PTHR43268:SF3">
    <property type="entry name" value="RHODANESE-LIKE DOMAIN-CONTAINING PROTEIN 7-RELATED"/>
    <property type="match status" value="1"/>
</dbReference>
<dbReference type="PANTHER" id="PTHR43268">
    <property type="entry name" value="THIOSULFATE SULFURTRANSFERASE/RHODANESE-LIKE DOMAIN-CONTAINING PROTEIN 2"/>
    <property type="match status" value="1"/>
</dbReference>
<dbReference type="Pfam" id="PF00581">
    <property type="entry name" value="Rhodanese"/>
    <property type="match status" value="1"/>
</dbReference>
<dbReference type="Pfam" id="PF12368">
    <property type="entry name" value="Rhodanese_C"/>
    <property type="match status" value="1"/>
</dbReference>
<dbReference type="Pfam" id="PF17773">
    <property type="entry name" value="UPF0176_N"/>
    <property type="match status" value="1"/>
</dbReference>
<dbReference type="SMART" id="SM00450">
    <property type="entry name" value="RHOD"/>
    <property type="match status" value="1"/>
</dbReference>
<dbReference type="SUPFAM" id="SSF52821">
    <property type="entry name" value="Rhodanese/Cell cycle control phosphatase"/>
    <property type="match status" value="1"/>
</dbReference>
<dbReference type="PROSITE" id="PS50206">
    <property type="entry name" value="RHODANESE_3"/>
    <property type="match status" value="1"/>
</dbReference>
<feature type="chain" id="PRO_0000242917" description="tRNA uridine(34) hydroxylase">
    <location>
        <begin position="1"/>
        <end position="325"/>
    </location>
</feature>
<feature type="domain" description="Rhodanese" evidence="1">
    <location>
        <begin position="122"/>
        <end position="218"/>
    </location>
</feature>
<feature type="active site" description="Cysteine persulfide intermediate" evidence="1">
    <location>
        <position position="178"/>
    </location>
</feature>
<gene>
    <name evidence="1" type="primary">trhO</name>
    <name type="ordered locus">CF0996</name>
</gene>
<protein>
    <recommendedName>
        <fullName evidence="1">tRNA uridine(34) hydroxylase</fullName>
        <ecNumber evidence="1">1.14.-.-</ecNumber>
    </recommendedName>
    <alternativeName>
        <fullName evidence="1">tRNA hydroxylation protein O</fullName>
    </alternativeName>
</protein>